<comment type="similarity">
    <text evidence="1">Belongs to the class-IV pyridoxal-phosphate-dependent aminotransferase family.</text>
</comment>
<comment type="sequence caution" evidence="1">
    <conflict type="erroneous gene model prediction">
        <sequence resource="EMBL-CDS" id="AAF27025"/>
    </conflict>
</comment>
<sequence length="555" mass="62212">MAEPEVIHSWSAPRSLSTSLMYSFAQRLDTEVVDEPLYASFLKATGFDRPYRDEVLSKMECNGEKVVKDVIYGSGSKKYRYCKHISKQRLFGLPSELMSRGKHFILIRNPLNILPSFEKVHPPSFLELGLGELVSIYSDLCQMGTPPAVIDADELQRDPETTLRGLCDDLEIPFQASMLKWKAGPIPEDGVWAPWWYKSVHESTGFSSPKKYPRTFPLSHYDLLERSLPLYNILRSHVKHSSSLLSSPLPPPSLPVPENAKLLAWVGDEILPREMAKVSVFDSVVQGGDSVWEGLRIYKGKIFKLEEHLDRLFDSAKALAFDNVPAREEVKEAIFRTLITNGMFDNTHIRLSLTRGKKVTSGMSPAYNRYGCTLIVLAEWKPPVYDNEGGIVLVTATTRRNSPNNLDSKIHHNNLLNNILAKIESNNTNAADAIMLDKDGYVSETNATNIFMVKKGCVLTPHADYCLPGITRATVMELVVKENFILEERRISLSEFHTANEVWTTGTMGELSPVVKIDGRVIGDGKVGPVTRTLQNAYKKLTEDSGVPIPTYQEP</sequence>
<feature type="chain" id="PRO_0000103300" description="Branched-chain-amino-acid aminotransferase-like protein 1">
    <location>
        <begin position="1"/>
        <end position="555"/>
    </location>
</feature>
<proteinExistence type="evidence at transcript level"/>
<organism>
    <name type="scientific">Arabidopsis thaliana</name>
    <name type="common">Mouse-ear cress</name>
    <dbReference type="NCBI Taxonomy" id="3702"/>
    <lineage>
        <taxon>Eukaryota</taxon>
        <taxon>Viridiplantae</taxon>
        <taxon>Streptophyta</taxon>
        <taxon>Embryophyta</taxon>
        <taxon>Tracheophyta</taxon>
        <taxon>Spermatophyta</taxon>
        <taxon>Magnoliopsida</taxon>
        <taxon>eudicotyledons</taxon>
        <taxon>Gunneridae</taxon>
        <taxon>Pentapetalae</taxon>
        <taxon>rosids</taxon>
        <taxon>malvids</taxon>
        <taxon>Brassicales</taxon>
        <taxon>Brassicaceae</taxon>
        <taxon>Camelineae</taxon>
        <taxon>Arabidopsis</taxon>
    </lineage>
</organism>
<accession>Q8W0Z7</accession>
<accession>Q9MAA0</accession>
<protein>
    <recommendedName>
        <fullName>Branched-chain-amino-acid aminotransferase-like protein 1</fullName>
        <shortName>Atbcat-like</shortName>
    </recommendedName>
</protein>
<keyword id="KW-1185">Reference proteome</keyword>
<name>BCAL1_ARATH</name>
<dbReference type="EMBL" id="AC009177">
    <property type="protein sequence ID" value="AAF27025.1"/>
    <property type="status" value="ALT_SEQ"/>
    <property type="molecule type" value="Genomic_DNA"/>
</dbReference>
<dbReference type="EMBL" id="CP002686">
    <property type="protein sequence ID" value="AEE74202.1"/>
    <property type="molecule type" value="Genomic_DNA"/>
</dbReference>
<dbReference type="EMBL" id="CP002686">
    <property type="protein sequence ID" value="ANM63984.1"/>
    <property type="molecule type" value="Genomic_DNA"/>
</dbReference>
<dbReference type="EMBL" id="CP002686">
    <property type="protein sequence ID" value="ANM63985.1"/>
    <property type="molecule type" value="Genomic_DNA"/>
</dbReference>
<dbReference type="EMBL" id="AF462849">
    <property type="protein sequence ID" value="AAL58936.1"/>
    <property type="molecule type" value="mRNA"/>
</dbReference>
<dbReference type="EMBL" id="AY090279">
    <property type="protein sequence ID" value="AAL90940.1"/>
    <property type="molecule type" value="mRNA"/>
</dbReference>
<dbReference type="RefSeq" id="NP_001319477.1">
    <property type="nucleotide sequence ID" value="NM_001337569.1"/>
</dbReference>
<dbReference type="RefSeq" id="NP_001326039.1">
    <property type="nucleotide sequence ID" value="NM_001337570.1"/>
</dbReference>
<dbReference type="RefSeq" id="NP_187170.2">
    <property type="nucleotide sequence ID" value="NM_111392.4"/>
</dbReference>
<dbReference type="SMR" id="Q8W0Z7"/>
<dbReference type="BioGRID" id="5018">
    <property type="interactions" value="1"/>
</dbReference>
<dbReference type="FunCoup" id="Q8W0Z7">
    <property type="interactions" value="14"/>
</dbReference>
<dbReference type="IntAct" id="Q8W0Z7">
    <property type="interactions" value="1"/>
</dbReference>
<dbReference type="STRING" id="3702.Q8W0Z7"/>
<dbReference type="iPTMnet" id="Q8W0Z7"/>
<dbReference type="PaxDb" id="3702-AT3G05190.1"/>
<dbReference type="ProteomicsDB" id="240647"/>
<dbReference type="EnsemblPlants" id="AT3G05190.1">
    <property type="protein sequence ID" value="AT3G05190.1"/>
    <property type="gene ID" value="AT3G05190"/>
</dbReference>
<dbReference type="EnsemblPlants" id="AT3G05190.2">
    <property type="protein sequence ID" value="AT3G05190.2"/>
    <property type="gene ID" value="AT3G05190"/>
</dbReference>
<dbReference type="EnsemblPlants" id="AT3G05190.3">
    <property type="protein sequence ID" value="AT3G05190.3"/>
    <property type="gene ID" value="AT3G05190"/>
</dbReference>
<dbReference type="GeneID" id="819683"/>
<dbReference type="Gramene" id="AT3G05190.1">
    <property type="protein sequence ID" value="AT3G05190.1"/>
    <property type="gene ID" value="AT3G05190"/>
</dbReference>
<dbReference type="Gramene" id="AT3G05190.2">
    <property type="protein sequence ID" value="AT3G05190.2"/>
    <property type="gene ID" value="AT3G05190"/>
</dbReference>
<dbReference type="Gramene" id="AT3G05190.3">
    <property type="protein sequence ID" value="AT3G05190.3"/>
    <property type="gene ID" value="AT3G05190"/>
</dbReference>
<dbReference type="KEGG" id="ath:AT3G05190"/>
<dbReference type="Araport" id="AT3G05190"/>
<dbReference type="TAIR" id="AT3G05190"/>
<dbReference type="eggNOG" id="KOG0975">
    <property type="taxonomic scope" value="Eukaryota"/>
</dbReference>
<dbReference type="HOGENOM" id="CLU_020844_5_1_1"/>
<dbReference type="InParanoid" id="Q8W0Z7"/>
<dbReference type="OMA" id="FCKHIAK"/>
<dbReference type="OrthoDB" id="25921at2759"/>
<dbReference type="PhylomeDB" id="Q8W0Z7"/>
<dbReference type="PRO" id="PR:Q8W0Z7"/>
<dbReference type="Proteomes" id="UP000006548">
    <property type="component" value="Chromosome 3"/>
</dbReference>
<dbReference type="ExpressionAtlas" id="Q8W0Z7">
    <property type="expression patterns" value="baseline and differential"/>
</dbReference>
<dbReference type="GO" id="GO:0003824">
    <property type="term" value="F:catalytic activity"/>
    <property type="evidence" value="ECO:0007669"/>
    <property type="project" value="InterPro"/>
</dbReference>
<dbReference type="GO" id="GO:0046394">
    <property type="term" value="P:carboxylic acid biosynthetic process"/>
    <property type="evidence" value="ECO:0007669"/>
    <property type="project" value="UniProtKB-ARBA"/>
</dbReference>
<dbReference type="CDD" id="cd01558">
    <property type="entry name" value="D-AAT_like"/>
    <property type="match status" value="1"/>
</dbReference>
<dbReference type="FunFam" id="3.30.470.10:FF:000010">
    <property type="entry name" value="Branched-chain-amino-acid aminotransferase-like protein 1"/>
    <property type="match status" value="1"/>
</dbReference>
<dbReference type="FunFam" id="3.20.10.10:FF:000011">
    <property type="entry name" value="Branched-chain-amino-acid aminotransferase-like protein 2"/>
    <property type="match status" value="1"/>
</dbReference>
<dbReference type="FunFam" id="3.40.50.300:FF:001594">
    <property type="entry name" value="Branched-chain-amino-acid aminotransferase-like protein 2"/>
    <property type="match status" value="1"/>
</dbReference>
<dbReference type="Gene3D" id="3.30.470.10">
    <property type="match status" value="1"/>
</dbReference>
<dbReference type="Gene3D" id="3.20.10.10">
    <property type="entry name" value="D-amino Acid Aminotransferase, subunit A, domain 2"/>
    <property type="match status" value="1"/>
</dbReference>
<dbReference type="Gene3D" id="3.40.50.300">
    <property type="entry name" value="P-loop containing nucleotide triphosphate hydrolases"/>
    <property type="match status" value="1"/>
</dbReference>
<dbReference type="InterPro" id="IPR001544">
    <property type="entry name" value="Aminotrans_IV"/>
</dbReference>
<dbReference type="InterPro" id="IPR036038">
    <property type="entry name" value="Aminotransferase-like"/>
</dbReference>
<dbReference type="InterPro" id="IPR043132">
    <property type="entry name" value="BCAT-like_C"/>
</dbReference>
<dbReference type="InterPro" id="IPR043131">
    <property type="entry name" value="BCAT-like_N"/>
</dbReference>
<dbReference type="InterPro" id="IPR050571">
    <property type="entry name" value="Class-IV_PLP-Dep_Aminotrnsfr"/>
</dbReference>
<dbReference type="InterPro" id="IPR027417">
    <property type="entry name" value="P-loop_NTPase"/>
</dbReference>
<dbReference type="PANTHER" id="PTHR42743">
    <property type="entry name" value="AMINO-ACID AMINOTRANSFERASE"/>
    <property type="match status" value="1"/>
</dbReference>
<dbReference type="PANTHER" id="PTHR42743:SF11">
    <property type="entry name" value="AMINODEOXYCHORISMATE LYASE"/>
    <property type="match status" value="1"/>
</dbReference>
<dbReference type="Pfam" id="PF01063">
    <property type="entry name" value="Aminotran_4"/>
    <property type="match status" value="1"/>
</dbReference>
<dbReference type="Pfam" id="PF19798">
    <property type="entry name" value="Sulfotransfer_5"/>
    <property type="match status" value="1"/>
</dbReference>
<dbReference type="SUPFAM" id="SSF56752">
    <property type="entry name" value="D-aminoacid aminotransferase-like PLP-dependent enzymes"/>
    <property type="match status" value="1"/>
</dbReference>
<dbReference type="SUPFAM" id="SSF52540">
    <property type="entry name" value="P-loop containing nucleoside triphosphate hydrolases"/>
    <property type="match status" value="1"/>
</dbReference>
<evidence type="ECO:0000305" key="1"/>
<gene>
    <name type="ordered locus">At3g05190</name>
    <name type="ORF">T12H1.16</name>
</gene>
<reference key="1">
    <citation type="journal article" date="2000" name="Nature">
        <title>Sequence and analysis of chromosome 3 of the plant Arabidopsis thaliana.</title>
        <authorList>
            <person name="Salanoubat M."/>
            <person name="Lemcke K."/>
            <person name="Rieger M."/>
            <person name="Ansorge W."/>
            <person name="Unseld M."/>
            <person name="Fartmann B."/>
            <person name="Valle G."/>
            <person name="Bloecker H."/>
            <person name="Perez-Alonso M."/>
            <person name="Obermaier B."/>
            <person name="Delseny M."/>
            <person name="Boutry M."/>
            <person name="Grivell L.A."/>
            <person name="Mache R."/>
            <person name="Puigdomenech P."/>
            <person name="De Simone V."/>
            <person name="Choisne N."/>
            <person name="Artiguenave F."/>
            <person name="Robert C."/>
            <person name="Brottier P."/>
            <person name="Wincker P."/>
            <person name="Cattolico L."/>
            <person name="Weissenbach J."/>
            <person name="Saurin W."/>
            <person name="Quetier F."/>
            <person name="Schaefer M."/>
            <person name="Mueller-Auer S."/>
            <person name="Gabel C."/>
            <person name="Fuchs M."/>
            <person name="Benes V."/>
            <person name="Wurmbach E."/>
            <person name="Drzonek H."/>
            <person name="Erfle H."/>
            <person name="Jordan N."/>
            <person name="Bangert S."/>
            <person name="Wiedelmann R."/>
            <person name="Kranz H."/>
            <person name="Voss H."/>
            <person name="Holland R."/>
            <person name="Brandt P."/>
            <person name="Nyakatura G."/>
            <person name="Vezzi A."/>
            <person name="D'Angelo M."/>
            <person name="Pallavicini A."/>
            <person name="Toppo S."/>
            <person name="Simionati B."/>
            <person name="Conrad A."/>
            <person name="Hornischer K."/>
            <person name="Kauer G."/>
            <person name="Loehnert T.-H."/>
            <person name="Nordsiek G."/>
            <person name="Reichelt J."/>
            <person name="Scharfe M."/>
            <person name="Schoen O."/>
            <person name="Bargues M."/>
            <person name="Terol J."/>
            <person name="Climent J."/>
            <person name="Navarro P."/>
            <person name="Collado C."/>
            <person name="Perez-Perez A."/>
            <person name="Ottenwaelder B."/>
            <person name="Duchemin D."/>
            <person name="Cooke R."/>
            <person name="Laudie M."/>
            <person name="Berger-Llauro C."/>
            <person name="Purnelle B."/>
            <person name="Masuy D."/>
            <person name="de Haan M."/>
            <person name="Maarse A.C."/>
            <person name="Alcaraz J.-P."/>
            <person name="Cottet A."/>
            <person name="Casacuberta E."/>
            <person name="Monfort A."/>
            <person name="Argiriou A."/>
            <person name="Flores M."/>
            <person name="Liguori R."/>
            <person name="Vitale D."/>
            <person name="Mannhaupt G."/>
            <person name="Haase D."/>
            <person name="Schoof H."/>
            <person name="Rudd S."/>
            <person name="Zaccaria P."/>
            <person name="Mewes H.-W."/>
            <person name="Mayer K.F.X."/>
            <person name="Kaul S."/>
            <person name="Town C.D."/>
            <person name="Koo H.L."/>
            <person name="Tallon L.J."/>
            <person name="Jenkins J."/>
            <person name="Rooney T."/>
            <person name="Rizzo M."/>
            <person name="Walts A."/>
            <person name="Utterback T."/>
            <person name="Fujii C.Y."/>
            <person name="Shea T.P."/>
            <person name="Creasy T.H."/>
            <person name="Haas B."/>
            <person name="Maiti R."/>
            <person name="Wu D."/>
            <person name="Peterson J."/>
            <person name="Van Aken S."/>
            <person name="Pai G."/>
            <person name="Militscher J."/>
            <person name="Sellers P."/>
            <person name="Gill J.E."/>
            <person name="Feldblyum T.V."/>
            <person name="Preuss D."/>
            <person name="Lin X."/>
            <person name="Nierman W.C."/>
            <person name="Salzberg S.L."/>
            <person name="White O."/>
            <person name="Venter J.C."/>
            <person name="Fraser C.M."/>
            <person name="Kaneko T."/>
            <person name="Nakamura Y."/>
            <person name="Sato S."/>
            <person name="Kato T."/>
            <person name="Asamizu E."/>
            <person name="Sasamoto S."/>
            <person name="Kimura T."/>
            <person name="Idesawa K."/>
            <person name="Kawashima K."/>
            <person name="Kishida Y."/>
            <person name="Kiyokawa C."/>
            <person name="Kohara M."/>
            <person name="Matsumoto M."/>
            <person name="Matsuno A."/>
            <person name="Muraki A."/>
            <person name="Nakayama S."/>
            <person name="Nakazaki N."/>
            <person name="Shinpo S."/>
            <person name="Takeuchi C."/>
            <person name="Wada T."/>
            <person name="Watanabe A."/>
            <person name="Yamada M."/>
            <person name="Yasuda M."/>
            <person name="Tabata S."/>
        </authorList>
    </citation>
    <scope>NUCLEOTIDE SEQUENCE [LARGE SCALE GENOMIC DNA]</scope>
    <source>
        <strain>cv. Columbia</strain>
    </source>
</reference>
<reference key="2">
    <citation type="journal article" date="2017" name="Plant J.">
        <title>Araport11: a complete reannotation of the Arabidopsis thaliana reference genome.</title>
        <authorList>
            <person name="Cheng C.Y."/>
            <person name="Krishnakumar V."/>
            <person name="Chan A.P."/>
            <person name="Thibaud-Nissen F."/>
            <person name="Schobel S."/>
            <person name="Town C.D."/>
        </authorList>
    </citation>
    <scope>GENOME REANNOTATION</scope>
    <source>
        <strain>cv. Columbia</strain>
    </source>
</reference>
<reference key="3">
    <citation type="journal article" date="2003" name="Science">
        <title>Empirical analysis of transcriptional activity in the Arabidopsis genome.</title>
        <authorList>
            <person name="Yamada K."/>
            <person name="Lim J."/>
            <person name="Dale J.M."/>
            <person name="Chen H."/>
            <person name="Shinn P."/>
            <person name="Palm C.J."/>
            <person name="Southwick A.M."/>
            <person name="Wu H.C."/>
            <person name="Kim C.J."/>
            <person name="Nguyen M."/>
            <person name="Pham P.K."/>
            <person name="Cheuk R.F."/>
            <person name="Karlin-Newmann G."/>
            <person name="Liu S.X."/>
            <person name="Lam B."/>
            <person name="Sakano H."/>
            <person name="Wu T."/>
            <person name="Yu G."/>
            <person name="Miranda M."/>
            <person name="Quach H.L."/>
            <person name="Tripp M."/>
            <person name="Chang C.H."/>
            <person name="Lee J.M."/>
            <person name="Toriumi M.J."/>
            <person name="Chan M.M."/>
            <person name="Tang C.C."/>
            <person name="Onodera C.S."/>
            <person name="Deng J.M."/>
            <person name="Akiyama K."/>
            <person name="Ansari Y."/>
            <person name="Arakawa T."/>
            <person name="Banh J."/>
            <person name="Banno F."/>
            <person name="Bowser L."/>
            <person name="Brooks S.Y."/>
            <person name="Carninci P."/>
            <person name="Chao Q."/>
            <person name="Choy N."/>
            <person name="Enju A."/>
            <person name="Goldsmith A.D."/>
            <person name="Gurjal M."/>
            <person name="Hansen N.F."/>
            <person name="Hayashizaki Y."/>
            <person name="Johnson-Hopson C."/>
            <person name="Hsuan V.W."/>
            <person name="Iida K."/>
            <person name="Karnes M."/>
            <person name="Khan S."/>
            <person name="Koesema E."/>
            <person name="Ishida J."/>
            <person name="Jiang P.X."/>
            <person name="Jones T."/>
            <person name="Kawai J."/>
            <person name="Kamiya A."/>
            <person name="Meyers C."/>
            <person name="Nakajima M."/>
            <person name="Narusaka M."/>
            <person name="Seki M."/>
            <person name="Sakurai T."/>
            <person name="Satou M."/>
            <person name="Tamse R."/>
            <person name="Vaysberg M."/>
            <person name="Wallender E.K."/>
            <person name="Wong C."/>
            <person name="Yamamura Y."/>
            <person name="Yuan S."/>
            <person name="Shinozaki K."/>
            <person name="Davis R.W."/>
            <person name="Theologis A."/>
            <person name="Ecker J.R."/>
        </authorList>
    </citation>
    <scope>NUCLEOTIDE SEQUENCE [LARGE SCALE MRNA]</scope>
    <source>
        <strain>cv. Columbia</strain>
    </source>
</reference>